<name>THIG_CUPNH</name>
<comment type="function">
    <text evidence="1">Catalyzes the rearrangement of 1-deoxy-D-xylulose 5-phosphate (DXP) to produce the thiazole phosphate moiety of thiamine. Sulfur is provided by the thiocarboxylate moiety of the carrier protein ThiS. In vitro, sulfur can be provided by H(2)S.</text>
</comment>
<comment type="catalytic activity">
    <reaction evidence="1">
        <text>[ThiS sulfur-carrier protein]-C-terminal-Gly-aminoethanethioate + 2-iminoacetate + 1-deoxy-D-xylulose 5-phosphate = [ThiS sulfur-carrier protein]-C-terminal Gly-Gly + 2-[(2R,5Z)-2-carboxy-4-methylthiazol-5(2H)-ylidene]ethyl phosphate + 2 H2O + H(+)</text>
        <dbReference type="Rhea" id="RHEA:26297"/>
        <dbReference type="Rhea" id="RHEA-COMP:12909"/>
        <dbReference type="Rhea" id="RHEA-COMP:19908"/>
        <dbReference type="ChEBI" id="CHEBI:15377"/>
        <dbReference type="ChEBI" id="CHEBI:15378"/>
        <dbReference type="ChEBI" id="CHEBI:57792"/>
        <dbReference type="ChEBI" id="CHEBI:62899"/>
        <dbReference type="ChEBI" id="CHEBI:77846"/>
        <dbReference type="ChEBI" id="CHEBI:90778"/>
        <dbReference type="ChEBI" id="CHEBI:232372"/>
        <dbReference type="EC" id="2.8.1.10"/>
    </reaction>
</comment>
<comment type="pathway">
    <text evidence="1">Cofactor biosynthesis; thiamine diphosphate biosynthesis.</text>
</comment>
<comment type="subunit">
    <text evidence="1">Homotetramer. Forms heterodimers with either ThiH or ThiS.</text>
</comment>
<comment type="subcellular location">
    <subcellularLocation>
        <location evidence="1">Cytoplasm</location>
    </subcellularLocation>
</comment>
<comment type="similarity">
    <text evidence="1">Belongs to the ThiG family.</text>
</comment>
<protein>
    <recommendedName>
        <fullName evidence="1">Thiazole synthase</fullName>
        <ecNumber evidence="1">2.8.1.10</ecNumber>
    </recommendedName>
</protein>
<keyword id="KW-0963">Cytoplasm</keyword>
<keyword id="KW-1185">Reference proteome</keyword>
<keyword id="KW-0704">Schiff base</keyword>
<keyword id="KW-0784">Thiamine biosynthesis</keyword>
<keyword id="KW-0808">Transferase</keyword>
<sequence length="278" mass="29952">MTFEPSETLRDPFVLYGESFGSRLLLGTARYPSPATLEAAVQASRPAMITVALRRQGAVGAGEGGQAFWQMLKALDVPVLPNTAGCFTAQEVITTAMMAREVFETPWIKLELIGDDYTLQPDTLNLPAVAETLIKEGFKVLPYCTEDLVLCRRLLDVGCQALMPWAAPIGTGRGAVNPHAMRVLRERLPDTPLIVDAGLGLPSHAAQVLEWGYDGVLLNTAVAQAAYPVNMARAFAQAVEAGRTAYLAGPMPEREVAQASTPVVGMPFWHADSTEQRA</sequence>
<dbReference type="EC" id="2.8.1.10" evidence="1"/>
<dbReference type="EMBL" id="AM260479">
    <property type="protein sequence ID" value="CAJ91390.1"/>
    <property type="molecule type" value="Genomic_DNA"/>
</dbReference>
<dbReference type="RefSeq" id="WP_010813326.1">
    <property type="nucleotide sequence ID" value="NZ_CP039287.1"/>
</dbReference>
<dbReference type="SMR" id="Q0KF31"/>
<dbReference type="STRING" id="381666.H16_A0238"/>
<dbReference type="KEGG" id="reh:H16_A0238"/>
<dbReference type="eggNOG" id="COG2022">
    <property type="taxonomic scope" value="Bacteria"/>
</dbReference>
<dbReference type="HOGENOM" id="CLU_062233_1_0_4"/>
<dbReference type="OrthoDB" id="9805935at2"/>
<dbReference type="UniPathway" id="UPA00060"/>
<dbReference type="Proteomes" id="UP000008210">
    <property type="component" value="Chromosome 1"/>
</dbReference>
<dbReference type="GO" id="GO:0005737">
    <property type="term" value="C:cytoplasm"/>
    <property type="evidence" value="ECO:0007669"/>
    <property type="project" value="UniProtKB-SubCell"/>
</dbReference>
<dbReference type="GO" id="GO:1990107">
    <property type="term" value="F:thiazole synthase activity"/>
    <property type="evidence" value="ECO:0007669"/>
    <property type="project" value="UniProtKB-EC"/>
</dbReference>
<dbReference type="GO" id="GO:0009229">
    <property type="term" value="P:thiamine diphosphate biosynthetic process"/>
    <property type="evidence" value="ECO:0007669"/>
    <property type="project" value="UniProtKB-UniRule"/>
</dbReference>
<dbReference type="CDD" id="cd04728">
    <property type="entry name" value="ThiG"/>
    <property type="match status" value="1"/>
</dbReference>
<dbReference type="Gene3D" id="3.20.20.70">
    <property type="entry name" value="Aldolase class I"/>
    <property type="match status" value="1"/>
</dbReference>
<dbReference type="HAMAP" id="MF_00443">
    <property type="entry name" value="ThiG"/>
    <property type="match status" value="1"/>
</dbReference>
<dbReference type="InterPro" id="IPR013785">
    <property type="entry name" value="Aldolase_TIM"/>
</dbReference>
<dbReference type="InterPro" id="IPR033983">
    <property type="entry name" value="Thiazole_synthase_ThiG"/>
</dbReference>
<dbReference type="InterPro" id="IPR008867">
    <property type="entry name" value="ThiG"/>
</dbReference>
<dbReference type="PANTHER" id="PTHR34266">
    <property type="entry name" value="THIAZOLE SYNTHASE"/>
    <property type="match status" value="1"/>
</dbReference>
<dbReference type="PANTHER" id="PTHR34266:SF2">
    <property type="entry name" value="THIAZOLE SYNTHASE"/>
    <property type="match status" value="1"/>
</dbReference>
<dbReference type="Pfam" id="PF05690">
    <property type="entry name" value="ThiG"/>
    <property type="match status" value="1"/>
</dbReference>
<dbReference type="SUPFAM" id="SSF110399">
    <property type="entry name" value="ThiG-like"/>
    <property type="match status" value="1"/>
</dbReference>
<gene>
    <name evidence="1" type="primary">thiG</name>
    <name type="ordered locus">H16_A0238</name>
</gene>
<reference key="1">
    <citation type="journal article" date="2006" name="Nat. Biotechnol.">
        <title>Genome sequence of the bioplastic-producing 'Knallgas' bacterium Ralstonia eutropha H16.</title>
        <authorList>
            <person name="Pohlmann A."/>
            <person name="Fricke W.F."/>
            <person name="Reinecke F."/>
            <person name="Kusian B."/>
            <person name="Liesegang H."/>
            <person name="Cramm R."/>
            <person name="Eitinger T."/>
            <person name="Ewering C."/>
            <person name="Poetter M."/>
            <person name="Schwartz E."/>
            <person name="Strittmatter A."/>
            <person name="Voss I."/>
            <person name="Gottschalk G."/>
            <person name="Steinbuechel A."/>
            <person name="Friedrich B."/>
            <person name="Bowien B."/>
        </authorList>
    </citation>
    <scope>NUCLEOTIDE SEQUENCE [LARGE SCALE GENOMIC DNA]</scope>
    <source>
        <strain>ATCC 17699 / DSM 428 / KCTC 22496 / NCIMB 10442 / H16 / Stanier 337</strain>
    </source>
</reference>
<feature type="chain" id="PRO_1000026033" description="Thiazole synthase">
    <location>
        <begin position="1"/>
        <end position="278"/>
    </location>
</feature>
<feature type="active site" description="Schiff-base intermediate with DXP" evidence="1">
    <location>
        <position position="109"/>
    </location>
</feature>
<feature type="binding site" evidence="1">
    <location>
        <position position="170"/>
    </location>
    <ligand>
        <name>1-deoxy-D-xylulose 5-phosphate</name>
        <dbReference type="ChEBI" id="CHEBI:57792"/>
    </ligand>
</feature>
<feature type="binding site" evidence="1">
    <location>
        <begin position="197"/>
        <end position="198"/>
    </location>
    <ligand>
        <name>1-deoxy-D-xylulose 5-phosphate</name>
        <dbReference type="ChEBI" id="CHEBI:57792"/>
    </ligand>
</feature>
<feature type="binding site" evidence="1">
    <location>
        <begin position="219"/>
        <end position="220"/>
    </location>
    <ligand>
        <name>1-deoxy-D-xylulose 5-phosphate</name>
        <dbReference type="ChEBI" id="CHEBI:57792"/>
    </ligand>
</feature>
<proteinExistence type="inferred from homology"/>
<accession>Q0KF31</accession>
<evidence type="ECO:0000255" key="1">
    <source>
        <dbReference type="HAMAP-Rule" id="MF_00443"/>
    </source>
</evidence>
<organism>
    <name type="scientific">Cupriavidus necator (strain ATCC 17699 / DSM 428 / KCTC 22496 / NCIMB 10442 / H16 / Stanier 337)</name>
    <name type="common">Ralstonia eutropha</name>
    <dbReference type="NCBI Taxonomy" id="381666"/>
    <lineage>
        <taxon>Bacteria</taxon>
        <taxon>Pseudomonadati</taxon>
        <taxon>Pseudomonadota</taxon>
        <taxon>Betaproteobacteria</taxon>
        <taxon>Burkholderiales</taxon>
        <taxon>Burkholderiaceae</taxon>
        <taxon>Cupriavidus</taxon>
    </lineage>
</organism>